<comment type="function">
    <molecule>Pancreastatin</molecule>
    <text>Strongly inhibits glucose induced insulin release from the pancreas.</text>
</comment>
<comment type="function">
    <text evidence="3">Catestatin inhibits catecholamine release from chromaffin cells and noradrenergic neurons by acting as a non-competitive nicotinic cholinergic antagonist. Can induce mast cell migration, degranulation and production of cytokines and chemokines.</text>
</comment>
<comment type="function">
    <text evidence="4 8">Serpinin regulates granule biogenesis in endocrine cells by up-regulating the transcription of protease nexin 1 (SERPINE2) via a cAMP-PKA-SP1 pathway. This leads to inhibition of granule protein degradation in the Golgi complex which in turn promotes granule formation (By similarity). Serpinin and pGlu-serpinin can enhance both myocardial contractility (inotropy) and relaxation (lusitropy) and this cardio-stimulation requires a beta 1-adrenergic receptor/adenylate cyclase/cAMP/PKA pathway (PubMed:22459152).</text>
</comment>
<comment type="subunit">
    <text evidence="2 3 7">Self-interacts; self-assembly is promoted in vitro by chondroitin sulfate attachment which occurs at mildly acidic pH conditions (By similarity). Interacts with SCG3; this interaction is optimal in conditions mimicking the lumenal milieu of the trans-Golgi network, i.e. pH 5.5 and 10 mM Ca(+2) (PubMed:12388744). Interacts with ITPR1 in the secretory granules (By similarity).</text>
</comment>
<comment type="subcellular location">
    <subcellularLocation>
        <location evidence="7 10">Cytoplasmic vesicle</location>
        <location evidence="7 10">Secretory vesicle</location>
    </subcellularLocation>
    <subcellularLocation>
        <location evidence="9">Cytoplasmic vesicle</location>
        <location evidence="9">Secretory vesicle</location>
        <location evidence="9">Neuronal dense core vesicle</location>
    </subcellularLocation>
    <subcellularLocation>
        <location>Secreted</location>
    </subcellularLocation>
    <text>Associated with the secretory granule membrane through direct interaction to SCG3 that in turn binds to cholesterol-enriched lipid rafts in intragranular conditions. In pituitary gonadotropes, located in large secretory granules.</text>
</comment>
<comment type="subcellular location">
    <molecule>Serpinin</molecule>
    <subcellularLocation>
        <location evidence="4">Secreted</location>
    </subcellularLocation>
    <subcellularLocation>
        <location evidence="4">Cytoplasmic vesicle</location>
        <location evidence="4">Secretory vesicle</location>
    </subcellularLocation>
    <text evidence="4">Pyroglutaminated serpinin localizes to secretory vesicle.</text>
</comment>
<comment type="tissue specificity">
    <text evidence="7">Expressed in the brain and adrenal and pituitary glands.</text>
</comment>
<comment type="PTM">
    <text evidence="3">O-glycosylated; contains chondroitin sulfate (CS). CS attachment is pH-dependent, being observed at mildly acidic conditions of pH 5 but not at neutral pH, and promotes self-assembly in vitro.</text>
</comment>
<comment type="miscellaneous">
    <text>Binds calcium with a low-affinity.</text>
</comment>
<comment type="similarity">
    <text evidence="12">Belongs to the chromogranin/secretogranin protein family.</text>
</comment>
<accession>P10354</accession>
<name>CMGA_RAT</name>
<keyword id="KW-0027">Amidation</keyword>
<keyword id="KW-0106">Calcium</keyword>
<keyword id="KW-0165">Cleavage on pair of basic residues</keyword>
<keyword id="KW-0968">Cytoplasmic vesicle</keyword>
<keyword id="KW-0903">Direct protein sequencing</keyword>
<keyword id="KW-1015">Disulfide bond</keyword>
<keyword id="KW-0325">Glycoprotein</keyword>
<keyword id="KW-0558">Oxidation</keyword>
<keyword id="KW-0597">Phosphoprotein</keyword>
<keyword id="KW-0654">Proteoglycan</keyword>
<keyword id="KW-0873">Pyrrolidone carboxylic acid</keyword>
<keyword id="KW-1185">Reference proteome</keyword>
<keyword id="KW-0964">Secreted</keyword>
<keyword id="KW-0732">Signal</keyword>
<dbReference type="EMBL" id="X06832">
    <property type="protein sequence ID" value="CAA29988.1"/>
    <property type="molecule type" value="mRNA"/>
</dbReference>
<dbReference type="PIR" id="A23996">
    <property type="entry name" value="A23996"/>
</dbReference>
<dbReference type="SMR" id="P10354"/>
<dbReference type="FunCoup" id="P10354">
    <property type="interactions" value="91"/>
</dbReference>
<dbReference type="STRING" id="10116.ENSRNOP00000070296"/>
<dbReference type="GlyGen" id="P10354">
    <property type="glycosylation" value="1 site"/>
</dbReference>
<dbReference type="iPTMnet" id="P10354"/>
<dbReference type="PhosphoSitePlus" id="P10354"/>
<dbReference type="jPOST" id="P10354"/>
<dbReference type="AGR" id="RGD:2338"/>
<dbReference type="RGD" id="2338">
    <property type="gene designation" value="Chga"/>
</dbReference>
<dbReference type="InParanoid" id="P10354"/>
<dbReference type="PhylomeDB" id="P10354"/>
<dbReference type="Reactome" id="R-RNO-6803157">
    <property type="pathway name" value="Antimicrobial peptides"/>
</dbReference>
<dbReference type="CD-CODE" id="ED8FE918">
    <property type="entry name" value="Chromogranin condensates"/>
</dbReference>
<dbReference type="PRO" id="PR:P10354"/>
<dbReference type="Proteomes" id="UP000002494">
    <property type="component" value="Unplaced"/>
</dbReference>
<dbReference type="GO" id="GO:0042583">
    <property type="term" value="C:chromaffin granule"/>
    <property type="evidence" value="ECO:0000314"/>
    <property type="project" value="RGD"/>
</dbReference>
<dbReference type="GO" id="GO:0005615">
    <property type="term" value="C:extracellular space"/>
    <property type="evidence" value="ECO:0000314"/>
    <property type="project" value="RGD"/>
</dbReference>
<dbReference type="GO" id="GO:0098992">
    <property type="term" value="C:neuronal dense core vesicle"/>
    <property type="evidence" value="ECO:0000314"/>
    <property type="project" value="UniProtKB"/>
</dbReference>
<dbReference type="GO" id="GO:0048471">
    <property type="term" value="C:perinuclear region of cytoplasm"/>
    <property type="evidence" value="ECO:0000266"/>
    <property type="project" value="RGD"/>
</dbReference>
<dbReference type="GO" id="GO:0030141">
    <property type="term" value="C:secretory granule"/>
    <property type="evidence" value="ECO:0000314"/>
    <property type="project" value="RGD"/>
</dbReference>
<dbReference type="GO" id="GO:0030133">
    <property type="term" value="C:transport vesicle"/>
    <property type="evidence" value="ECO:0007669"/>
    <property type="project" value="UniProtKB-SubCell"/>
</dbReference>
<dbReference type="GO" id="GO:0042742">
    <property type="term" value="P:defense response to bacterium"/>
    <property type="evidence" value="ECO:0000318"/>
    <property type="project" value="GO_Central"/>
</dbReference>
<dbReference type="GO" id="GO:0050829">
    <property type="term" value="P:defense response to Gram-negative bacterium"/>
    <property type="evidence" value="ECO:0000250"/>
    <property type="project" value="UniProtKB"/>
</dbReference>
<dbReference type="GO" id="GO:0050830">
    <property type="term" value="P:defense response to Gram-positive bacterium"/>
    <property type="evidence" value="ECO:0000250"/>
    <property type="project" value="UniProtKB"/>
</dbReference>
<dbReference type="GO" id="GO:0045576">
    <property type="term" value="P:mast cell activation"/>
    <property type="evidence" value="ECO:0000250"/>
    <property type="project" value="UniProtKB"/>
</dbReference>
<dbReference type="GO" id="GO:0002551">
    <property type="term" value="P:mast cell chemotaxis"/>
    <property type="evidence" value="ECO:0000250"/>
    <property type="project" value="UniProtKB"/>
</dbReference>
<dbReference type="GO" id="GO:0043303">
    <property type="term" value="P:mast cell degranulation"/>
    <property type="evidence" value="ECO:0000250"/>
    <property type="project" value="UniProtKB"/>
</dbReference>
<dbReference type="GO" id="GO:0033604">
    <property type="term" value="P:negative regulation of catecholamine secretion"/>
    <property type="evidence" value="ECO:0000250"/>
    <property type="project" value="UniProtKB"/>
</dbReference>
<dbReference type="GO" id="GO:0046676">
    <property type="term" value="P:negative regulation of insulin secretion"/>
    <property type="evidence" value="ECO:0000318"/>
    <property type="project" value="GO_Central"/>
</dbReference>
<dbReference type="GO" id="GO:0042698">
    <property type="term" value="P:ovulation cycle"/>
    <property type="evidence" value="ECO:0000270"/>
    <property type="project" value="RGD"/>
</dbReference>
<dbReference type="GO" id="GO:0141163">
    <property type="term" value="P:positive regulation of cAMP/PKA signal transduction"/>
    <property type="evidence" value="ECO:0000314"/>
    <property type="project" value="RGD"/>
</dbReference>
<dbReference type="GO" id="GO:0060452">
    <property type="term" value="P:positive regulation of cardiac muscle contraction"/>
    <property type="evidence" value="ECO:0000314"/>
    <property type="project" value="UniProtKB"/>
</dbReference>
<dbReference type="GO" id="GO:2000707">
    <property type="term" value="P:positive regulation of dense core granule biogenesis"/>
    <property type="evidence" value="ECO:0000250"/>
    <property type="project" value="UniProtKB"/>
</dbReference>
<dbReference type="GO" id="GO:1900738">
    <property type="term" value="P:positive regulation of phospholipase C-activating G protein-coupled receptor signaling pathway"/>
    <property type="evidence" value="ECO:0000314"/>
    <property type="project" value="RGD"/>
</dbReference>
<dbReference type="GO" id="GO:1901899">
    <property type="term" value="P:positive regulation of relaxation of cardiac muscle"/>
    <property type="evidence" value="ECO:0000314"/>
    <property type="project" value="UniProtKB"/>
</dbReference>
<dbReference type="GO" id="GO:0045907">
    <property type="term" value="P:positive regulation of vasoconstriction"/>
    <property type="evidence" value="ECO:0000314"/>
    <property type="project" value="RGD"/>
</dbReference>
<dbReference type="GO" id="GO:0033366">
    <property type="term" value="P:protein localization to secretory granule"/>
    <property type="evidence" value="ECO:0000266"/>
    <property type="project" value="RGD"/>
</dbReference>
<dbReference type="GO" id="GO:0051480">
    <property type="term" value="P:regulation of cytosolic calcium ion concentration"/>
    <property type="evidence" value="ECO:0000314"/>
    <property type="project" value="RGD"/>
</dbReference>
<dbReference type="GO" id="GO:0002026">
    <property type="term" value="P:regulation of the force of heart contraction"/>
    <property type="evidence" value="ECO:0000314"/>
    <property type="project" value="RGD"/>
</dbReference>
<dbReference type="InterPro" id="IPR001819">
    <property type="entry name" value="Chromogranin_AB"/>
</dbReference>
<dbReference type="InterPro" id="IPR018054">
    <property type="entry name" value="Chromogranin_CS"/>
</dbReference>
<dbReference type="InterPro" id="IPR001990">
    <property type="entry name" value="Granin"/>
</dbReference>
<dbReference type="PANTHER" id="PTHR10583">
    <property type="entry name" value="CHROMOGRANIN"/>
    <property type="match status" value="1"/>
</dbReference>
<dbReference type="PANTHER" id="PTHR10583:SF1">
    <property type="entry name" value="CHROMOGRANIN-A"/>
    <property type="match status" value="1"/>
</dbReference>
<dbReference type="Pfam" id="PF01271">
    <property type="entry name" value="Granin"/>
    <property type="match status" value="2"/>
</dbReference>
<dbReference type="PRINTS" id="PR00659">
    <property type="entry name" value="CHROMOGRANIN"/>
</dbReference>
<dbReference type="PROSITE" id="PS00422">
    <property type="entry name" value="GRANINS_1"/>
    <property type="match status" value="1"/>
</dbReference>
<dbReference type="PROSITE" id="PS00423">
    <property type="entry name" value="GRANINS_2"/>
    <property type="match status" value="1"/>
</dbReference>
<feature type="signal peptide" evidence="10">
    <location>
        <begin position="1"/>
        <end position="18"/>
    </location>
</feature>
<feature type="chain" id="PRO_0000005430" description="Chromogranin-A">
    <location>
        <begin position="19"/>
        <end position="466"/>
    </location>
</feature>
<feature type="peptide" id="PRO_0000005431" description="Beta-granin">
    <location>
        <begin position="19"/>
        <end position="146"/>
    </location>
</feature>
<feature type="peptide" id="PRO_0000005432" description="Pancreastatin" evidence="5">
    <location>
        <begin position="281"/>
        <end position="332"/>
    </location>
</feature>
<feature type="peptide" id="PRO_0000005433" description="WE-14">
    <location>
        <begin position="361"/>
        <end position="374"/>
    </location>
</feature>
<feature type="peptide" id="PRO_0000432697" description="Catestatin" evidence="3">
    <location>
        <begin position="385"/>
        <end position="405"/>
    </location>
</feature>
<feature type="peptide" id="PRO_0000432698" description="GE-25" evidence="2">
    <location>
        <begin position="408"/>
        <end position="426"/>
    </location>
</feature>
<feature type="peptide" id="PRO_0000432699" description="Serpinin-RRG" evidence="8">
    <location>
        <begin position="438"/>
        <end position="466"/>
    </location>
</feature>
<feature type="peptide" id="PRO_0000432700" description="Serpinin" evidence="8">
    <location>
        <begin position="438"/>
        <end position="463"/>
    </location>
</feature>
<feature type="peptide" id="PRO_0000432701" description="p-Glu serpinin precursor" evidence="4">
    <location>
        <begin position="441"/>
        <end position="463"/>
    </location>
</feature>
<feature type="region of interest" description="Disordered" evidence="6">
    <location>
        <begin position="91"/>
        <end position="443"/>
    </location>
</feature>
<feature type="compositionally biased region" description="Low complexity" evidence="6">
    <location>
        <begin position="92"/>
        <end position="111"/>
    </location>
</feature>
<feature type="compositionally biased region" description="Basic and acidic residues" evidence="6">
    <location>
        <begin position="131"/>
        <end position="155"/>
    </location>
</feature>
<feature type="compositionally biased region" description="Polar residues" evidence="6">
    <location>
        <begin position="177"/>
        <end position="213"/>
    </location>
</feature>
<feature type="compositionally biased region" description="Acidic residues" evidence="6">
    <location>
        <begin position="233"/>
        <end position="247"/>
    </location>
</feature>
<feature type="compositionally biased region" description="Basic and acidic residues" evidence="6">
    <location>
        <begin position="248"/>
        <end position="259"/>
    </location>
</feature>
<feature type="compositionally biased region" description="Basic and acidic residues" evidence="6">
    <location>
        <begin position="305"/>
        <end position="314"/>
    </location>
</feature>
<feature type="compositionally biased region" description="Basic and acidic residues" evidence="6">
    <location>
        <begin position="351"/>
        <end position="378"/>
    </location>
</feature>
<feature type="compositionally biased region" description="Basic and acidic residues" evidence="6">
    <location>
        <begin position="412"/>
        <end position="440"/>
    </location>
</feature>
<feature type="modified residue" description="Phosphoserine" evidence="2">
    <location>
        <position position="114"/>
    </location>
</feature>
<feature type="modified residue" description="Phosphoserine" evidence="3">
    <location>
        <position position="215"/>
    </location>
</feature>
<feature type="modified residue" description="Phosphoserine" evidence="4">
    <location>
        <position position="288"/>
    </location>
</feature>
<feature type="modified residue" description="Phosphoserine" evidence="13">
    <location>
        <position position="312"/>
    </location>
</feature>
<feature type="modified residue" description="Glycine amide" evidence="2">
    <location>
        <position position="332"/>
    </location>
</feature>
<feature type="modified residue" description="Phosphoserine" evidence="13">
    <location>
        <position position="353"/>
    </location>
</feature>
<feature type="modified residue" description="Phosphoserine" evidence="13">
    <location>
        <position position="386"/>
    </location>
</feature>
<feature type="modified residue" description="Methionine sulfoxide" evidence="3">
    <location>
        <position position="387"/>
    </location>
</feature>
<feature type="modified residue" description="Phosphoserine" evidence="2">
    <location>
        <position position="413"/>
    </location>
</feature>
<feature type="modified residue" description="Phosphoserine" evidence="13">
    <location>
        <position position="417"/>
    </location>
</feature>
<feature type="modified residue" description="Phosphoserine" evidence="13">
    <location>
        <position position="433"/>
    </location>
</feature>
<feature type="modified residue" description="Pyrrolidone carboxylic acid" evidence="4 11">
    <location>
        <position position="441"/>
    </location>
</feature>
<feature type="modified residue" description="Phosphoserine" evidence="13">
    <location>
        <position position="447"/>
    </location>
</feature>
<feature type="glycosylation site" description="O-linked (Xyl...) (chondroitin sulfate) serine" evidence="3">
    <location>
        <position position="433"/>
    </location>
</feature>
<feature type="disulfide bond" evidence="1">
    <location>
        <begin position="35"/>
        <end position="56"/>
    </location>
</feature>
<organism>
    <name type="scientific">Rattus norvegicus</name>
    <name type="common">Rat</name>
    <dbReference type="NCBI Taxonomy" id="10116"/>
    <lineage>
        <taxon>Eukaryota</taxon>
        <taxon>Metazoa</taxon>
        <taxon>Chordata</taxon>
        <taxon>Craniata</taxon>
        <taxon>Vertebrata</taxon>
        <taxon>Euteleostomi</taxon>
        <taxon>Mammalia</taxon>
        <taxon>Eutheria</taxon>
        <taxon>Euarchontoglires</taxon>
        <taxon>Glires</taxon>
        <taxon>Rodentia</taxon>
        <taxon>Myomorpha</taxon>
        <taxon>Muroidea</taxon>
        <taxon>Muridae</taxon>
        <taxon>Murinae</taxon>
        <taxon>Rattus</taxon>
    </lineage>
</organism>
<proteinExistence type="evidence at protein level"/>
<gene>
    <name type="primary">Chga</name>
</gene>
<evidence type="ECO:0000250" key="1"/>
<evidence type="ECO:0000250" key="2">
    <source>
        <dbReference type="UniProtKB" id="P05059"/>
    </source>
</evidence>
<evidence type="ECO:0000250" key="3">
    <source>
        <dbReference type="UniProtKB" id="P10645"/>
    </source>
</evidence>
<evidence type="ECO:0000250" key="4">
    <source>
        <dbReference type="UniProtKB" id="P26339"/>
    </source>
</evidence>
<evidence type="ECO:0000255" key="5"/>
<evidence type="ECO:0000256" key="6">
    <source>
        <dbReference type="SAM" id="MobiDB-lite"/>
    </source>
</evidence>
<evidence type="ECO:0000269" key="7">
    <source>
    </source>
</evidence>
<evidence type="ECO:0000269" key="8">
    <source>
    </source>
</evidence>
<evidence type="ECO:0000269" key="9">
    <source>
    </source>
</evidence>
<evidence type="ECO:0000269" key="10">
    <source>
    </source>
</evidence>
<evidence type="ECO:0000303" key="11">
    <source>
    </source>
</evidence>
<evidence type="ECO:0000305" key="12"/>
<evidence type="ECO:0007744" key="13">
    <source>
    </source>
</evidence>
<sequence length="466" mass="52024">MRSSAALALLLCAGQVFALPVNSPMTKGDTKVMKCVLEVISDSLSKPSPMPVSPECLETLQGDERVLSILRHQNLLKELQDLALQGAKERAQQQQQQQQQQQQQQQQQQQQHSSFEDELSEVFENQSPAAKHGDAASEAPSKDTVEKREDSDKGQQDAFEGTTEGPRPQAFPEPKQESSMMGNSQSPGEDTANNTQSPTSLPSQEHGIPQTTEGSERGPSAQQQARKAKQEEKEEEEEEKEEEEEEKEEKAIAREKAGPKEVPTAASSSHFYSGYKKIQKDDDGQSESQAVNGKTGASEAVPSEGKGELEHSQQEEDGEEAMAGPPQGLFPGGKGQELERKQQEEEEEEERLSREWEDKRWSRMDQLAKELTAEKRLEGEDDPDRSMKLSFRARAYGFRDPGPQLRRGWRPSSREDSVEARGDFEEKKEEEGSANRRAEDQELESLSAIEAELEKVAHQLQALRRG</sequence>
<protein>
    <recommendedName>
        <fullName>Chromogranin-A</fullName>
        <shortName>CgA</shortName>
    </recommendedName>
    <component>
        <recommendedName>
            <fullName>Pancreastatin</fullName>
        </recommendedName>
    </component>
    <component>
        <recommendedName>
            <fullName>Beta-granin</fullName>
        </recommendedName>
    </component>
    <component>
        <recommendedName>
            <fullName>WE-14</fullName>
        </recommendedName>
    </component>
    <component>
        <recommendedName>
            <fullName>Catestatin</fullName>
        </recommendedName>
    </component>
    <component>
        <recommendedName>
            <fullName>GE-25</fullName>
        </recommendedName>
    </component>
    <component>
        <recommendedName>
            <fullName evidence="11">Serpinin-RRG</fullName>
        </recommendedName>
    </component>
    <component>
        <recommendedName>
            <fullName evidence="11">Serpinin</fullName>
        </recommendedName>
    </component>
    <component>
        <recommendedName>
            <fullName>p-Glu serpinin precursor</fullName>
        </recommendedName>
    </component>
</protein>
<reference key="1">
    <citation type="journal article" date="1988" name="FEBS Lett.">
        <title>Primary structure of rat chromogranin A and distribution of its mRNA.</title>
        <authorList>
            <person name="Iacangelo A."/>
            <person name="Okayama H."/>
            <person name="Eiden L.E."/>
        </authorList>
    </citation>
    <scope>NUCLEOTIDE SEQUENCE [MRNA]</scope>
</reference>
<reference key="2">
    <citation type="journal article" date="1988" name="FEBS Lett.">
        <title>The molecular cloning of the chromogranin A-like precursor of beta-granin and pancreastatin from the endocrine pancreas.</title>
        <authorList>
            <person name="Hutton J.C."/>
            <person name="Nielsen E."/>
            <person name="Kastern W."/>
        </authorList>
    </citation>
    <scope>NUCLEOTIDE SEQUENCE [MRNA] OF 29-466</scope>
    <source>
        <tissue>Pancreas</tissue>
    </source>
</reference>
<reference key="3">
    <citation type="journal article" date="1985" name="FEBS Lett.">
        <title>Beta-granins: 21 kDa co-secreted peptides of the insulin granule closely related to adrenal medullary chromogranin A.</title>
        <authorList>
            <person name="Hutton J.C."/>
            <person name="Hansen F."/>
            <person name="Peshavaria M."/>
        </authorList>
    </citation>
    <scope>PROTEIN SEQUENCE OF 19-32</scope>
</reference>
<reference key="4">
    <citation type="journal article" date="2002" name="Mol. Biol. Cell">
        <title>Identification of a chromogranin A domain that mediates binding to secretogranin III and targeting to secretory granules in pituitary cells and pancreatic beta-cells.</title>
        <authorList>
            <person name="Hosaka M."/>
            <person name="Watanabe T."/>
            <person name="Sakai Y."/>
            <person name="Uchiyama Y."/>
            <person name="Takeuchi T."/>
        </authorList>
    </citation>
    <scope>INTERACTION WITH SCG3</scope>
    <scope>SUBCELLULAR LOCATION</scope>
    <scope>TISSUE SPECIFICITY</scope>
</reference>
<reference key="5">
    <citation type="journal article" date="2004" name="J. Biol. Chem.">
        <title>Secretogranin III binds to cholesterol in the secretory granule membrane as an adapter for chromogranin A.</title>
        <authorList>
            <person name="Hosaka M."/>
            <person name="Suda M."/>
            <person name="Sakai Y."/>
            <person name="Izumi T."/>
            <person name="Watanabe T."/>
            <person name="Takeuchi T."/>
        </authorList>
    </citation>
    <scope>SUBCELLULAR LOCATION</scope>
</reference>
<reference key="6">
    <citation type="journal article" date="2012" name="FASEB J.">
        <title>The novel chromogranin A-derived serpinin and pyroglutaminated serpinin peptides are positive cardiac beta-adrenergic-like inotropes.</title>
        <authorList>
            <person name="Tota B."/>
            <person name="Gentile S."/>
            <person name="Pasqua T."/>
            <person name="Bassino E."/>
            <person name="Koshimizu H."/>
            <person name="Cawley N.X."/>
            <person name="Cerra M.C."/>
            <person name="Loh Y.P."/>
            <person name="Angelone T."/>
        </authorList>
    </citation>
    <scope>IDENTIFICATION OF SERPININ PEPTIDE; SERPININ-RRG PEPTIDE AND PYROGLUTAMINATED SERPININ</scope>
    <scope>FUNCTION (SERPININ)</scope>
    <scope>PYROGLUTAMATE FORMATION AT GLN-441</scope>
</reference>
<reference key="7">
    <citation type="journal article" date="2012" name="Nat. Commun.">
        <title>Quantitative maps of protein phosphorylation sites across 14 different rat organs and tissues.</title>
        <authorList>
            <person name="Lundby A."/>
            <person name="Secher A."/>
            <person name="Lage K."/>
            <person name="Nordsborg N.B."/>
            <person name="Dmytriyev A."/>
            <person name="Lundby C."/>
            <person name="Olsen J.V."/>
        </authorList>
    </citation>
    <scope>PHOSPHORYLATION [LARGE SCALE ANALYSIS] AT SER-312; SER-353; SER-386; SER-417; SER-433 AND SER-447</scope>
    <scope>IDENTIFICATION BY MASS SPECTROMETRY [LARGE SCALE ANALYSIS]</scope>
</reference>
<reference key="8">
    <citation type="journal article" date="2017" name="Cell Rep.">
        <title>Capture of Dense Core Vesicles at Synapses by JNK-Dependent Phosphorylation of Synaptotagmin-4.</title>
        <authorList>
            <person name="Bharat V."/>
            <person name="Siebrecht M."/>
            <person name="Burk K."/>
            <person name="Ahmed S."/>
            <person name="Reissner C."/>
            <person name="Kohansal-Nodehi M."/>
            <person name="Steubler V."/>
            <person name="Zweckstetter M."/>
            <person name="Ting J.T."/>
            <person name="Dean C."/>
        </authorList>
    </citation>
    <scope>SUBCELLULAR LOCATION</scope>
</reference>